<proteinExistence type="evidence at protein level"/>
<accession>O15117</accession>
<accession>A8K2Y8</accession>
<accession>B4DLN2</accession>
<accession>E9PBV9</accession>
<accession>O00359</accession>
<accession>Q9NZI9</accession>
<evidence type="ECO:0000250" key="1">
    <source>
        <dbReference type="UniProtKB" id="D3ZIE4"/>
    </source>
</evidence>
<evidence type="ECO:0000250" key="2">
    <source>
        <dbReference type="UniProtKB" id="O35601"/>
    </source>
</evidence>
<evidence type="ECO:0000255" key="3"/>
<evidence type="ECO:0000255" key="4">
    <source>
        <dbReference type="PROSITE-ProRule" id="PRU00192"/>
    </source>
</evidence>
<evidence type="ECO:0000255" key="5">
    <source>
        <dbReference type="PROSITE-ProRule" id="PRU00768"/>
    </source>
</evidence>
<evidence type="ECO:0000256" key="6">
    <source>
        <dbReference type="SAM" id="MobiDB-lite"/>
    </source>
</evidence>
<evidence type="ECO:0000269" key="7">
    <source>
    </source>
</evidence>
<evidence type="ECO:0000269" key="8">
    <source>
    </source>
</evidence>
<evidence type="ECO:0000269" key="9">
    <source>
    </source>
</evidence>
<evidence type="ECO:0000269" key="10">
    <source>
    </source>
</evidence>
<evidence type="ECO:0000269" key="11">
    <source>
    </source>
</evidence>
<evidence type="ECO:0000269" key="12">
    <source>
    </source>
</evidence>
<evidence type="ECO:0000269" key="13">
    <source>
    </source>
</evidence>
<evidence type="ECO:0000269" key="14">
    <source>
    </source>
</evidence>
<evidence type="ECO:0000269" key="15">
    <source>
    </source>
</evidence>
<evidence type="ECO:0000269" key="16">
    <source>
    </source>
</evidence>
<evidence type="ECO:0000269" key="17">
    <source>
    </source>
</evidence>
<evidence type="ECO:0000269" key="18">
    <source>
    </source>
</evidence>
<evidence type="ECO:0000269" key="19">
    <source>
    </source>
</evidence>
<evidence type="ECO:0000269" key="20">
    <source>
    </source>
</evidence>
<evidence type="ECO:0000269" key="21">
    <source>
    </source>
</evidence>
<evidence type="ECO:0000269" key="22">
    <source>
    </source>
</evidence>
<evidence type="ECO:0000269" key="23">
    <source>
    </source>
</evidence>
<evidence type="ECO:0000303" key="24">
    <source>
    </source>
</evidence>
<evidence type="ECO:0000303" key="25">
    <source>
    </source>
</evidence>
<evidence type="ECO:0000303" key="26">
    <source>
    </source>
</evidence>
<evidence type="ECO:0000305" key="27"/>
<evidence type="ECO:0000312" key="28">
    <source>
        <dbReference type="HGNC" id="HGNC:4036"/>
    </source>
</evidence>
<evidence type="ECO:0007744" key="29">
    <source>
    </source>
</evidence>
<evidence type="ECO:0007744" key="30">
    <source>
    </source>
</evidence>
<evidence type="ECO:0007744" key="31">
    <source>
    </source>
</evidence>
<evidence type="ECO:0007744" key="32">
    <source>
    </source>
</evidence>
<evidence type="ECO:0007829" key="33">
    <source>
        <dbReference type="PDB" id="1RI9"/>
    </source>
</evidence>
<evidence type="ECO:0007829" key="34">
    <source>
        <dbReference type="PDB" id="2GTJ"/>
    </source>
</evidence>
<evidence type="ECO:0007829" key="35">
    <source>
        <dbReference type="PDB" id="2GTO"/>
    </source>
</evidence>
<keyword id="KW-0002">3D-structure</keyword>
<keyword id="KW-0007">Acetylation</keyword>
<keyword id="KW-0025">Alternative splicing</keyword>
<keyword id="KW-0965">Cell junction</keyword>
<keyword id="KW-0175">Coiled coil</keyword>
<keyword id="KW-0963">Cytoplasm</keyword>
<keyword id="KW-0903">Direct protein sequencing</keyword>
<keyword id="KW-0225">Disease variant</keyword>
<keyword id="KW-0539">Nucleus</keyword>
<keyword id="KW-0597">Phosphoprotein</keyword>
<keyword id="KW-1267">Proteomics identification</keyword>
<keyword id="KW-1185">Reference proteome</keyword>
<keyword id="KW-0677">Repeat</keyword>
<keyword id="KW-0728">SH3 domain</keyword>
<gene>
    <name evidence="28" type="primary">FYB1</name>
    <name type="synonym">FYB</name>
    <name type="synonym">SLAP130</name>
</gene>
<protein>
    <recommendedName>
        <fullName evidence="28">FYN-binding protein 1</fullName>
    </recommendedName>
    <alternativeName>
        <fullName>Adhesion and degranulation promoting adaptor protein</fullName>
        <shortName>ADAP</shortName>
    </alternativeName>
    <alternativeName>
        <fullName>FYB-120/130</fullName>
        <shortName>p120/p130</shortName>
    </alternativeName>
    <alternativeName>
        <fullName>FYN-T-binding protein</fullName>
    </alternativeName>
    <alternativeName>
        <fullName>SLAP-130</fullName>
    </alternativeName>
    <alternativeName>
        <fullName>SLP-76-associated phosphoprotein</fullName>
    </alternativeName>
</protein>
<sequence>MAKYNTGGNPTEDVSVNSRPFRVTGPNSSSGIQARKNLFNNQGNASPPAGPSNVPKFGSPKPPVAVKPSSEEKPDKEPKPPFLKPTGAGQRFGTPASLTTRDPEAKVGFLKPVGPKPINLPKEDSKPTFPWPPGNKPSLHSVNQDHDLKPLGPKSGPTPPTSENEQKQAFPKLTGVKGKFMSASQDLEPKPLFPKPAFGQKPPLSTENSHEDESPMKNVSSSKGSPAPLGVRSKSGPLKPAREDSENKDHAGEISSLPFPGVVLKPAASRGGPGLSKNGEEKKEDRKIDAAKNTFQSKINQEELASGTPPARFPKAPSKLTVGGPWGQSQEKEKGDKNSATPKQKPLPPLFTLGPPPPKPNRPPNVDLTKFHKTSSGNSTSKGQTSYSTTSLPPPPPSHPASQPPLPASHPSQPPVPSLPPRNIKPPFDLKSPVNEDNQDGVTHSDGAGNLDEEQDSEGETYEDIEASKEREKKREKEEKKRLELEKKEQKEKEKKEQEIKKKFKLTGPIQVIHLAKACCDVKGGKNELSFKQGEQIEIIRITDNPEGKWLGRTARGSYGYIKTTAVEIDYDSLKLKKDSLGAPSRPIEDDQEVYDDVAEQDDISSHSQSGSGGIFPPPPDDDIYDGIEEEDADDGFPAPPKQLDMGDEVYDDVDTSDFPVSSAEMSQGTNVGKAKTEEKDLKKLKKQEKEEKDFRKKFKYDGEIRVLYSTKVTTSITSKKWGTRDLQVKPGESLEVIQTTDDTKVLCRNEEGKYGYVLRSYLADNDGEIYDDIADGCIYDND</sequence>
<name>FYB1_HUMAN</name>
<organism>
    <name type="scientific">Homo sapiens</name>
    <name type="common">Human</name>
    <dbReference type="NCBI Taxonomy" id="9606"/>
    <lineage>
        <taxon>Eukaryota</taxon>
        <taxon>Metazoa</taxon>
        <taxon>Chordata</taxon>
        <taxon>Craniata</taxon>
        <taxon>Vertebrata</taxon>
        <taxon>Euteleostomi</taxon>
        <taxon>Mammalia</taxon>
        <taxon>Eutheria</taxon>
        <taxon>Euarchontoglires</taxon>
        <taxon>Primates</taxon>
        <taxon>Haplorrhini</taxon>
        <taxon>Catarrhini</taxon>
        <taxon>Hominidae</taxon>
        <taxon>Homo</taxon>
    </lineage>
</organism>
<feature type="chain" id="PRO_0000087396" description="FYN-binding protein 1">
    <location>
        <begin position="1"/>
        <end position="783"/>
    </location>
</feature>
<feature type="domain" description="SH3 1" evidence="4">
    <location>
        <begin position="511"/>
        <end position="572"/>
    </location>
</feature>
<feature type="domain" description="SH3 2" evidence="4">
    <location>
        <begin position="700"/>
        <end position="768"/>
    </location>
</feature>
<feature type="region of interest" description="Disordered" evidence="6">
    <location>
        <begin position="1"/>
        <end position="502"/>
    </location>
</feature>
<feature type="region of interest" description="Interaction with SKAP1">
    <location>
        <begin position="348"/>
        <end position="448"/>
    </location>
</feature>
<feature type="region of interest" description="Disordered" evidence="6">
    <location>
        <begin position="598"/>
        <end position="678"/>
    </location>
</feature>
<feature type="coiled-coil region" evidence="3">
    <location>
        <begin position="456"/>
        <end position="507"/>
    </location>
</feature>
<feature type="short sequence motif" description="SH2-binding" evidence="3">
    <location>
        <begin position="462"/>
        <end position="465"/>
    </location>
</feature>
<feature type="short sequence motif" description="Nuclear localization signal" evidence="3">
    <location>
        <begin position="469"/>
        <end position="505"/>
    </location>
</feature>
<feature type="short sequence motif" description="SH2-binding; to LCP2">
    <location>
        <begin position="595"/>
        <end position="598"/>
    </location>
</feature>
<feature type="short sequence motif" description="SH2-binding; to FYN">
    <location>
        <begin position="625"/>
        <end position="628"/>
    </location>
</feature>
<feature type="short sequence motif" description="Nuclear localization signal" evidence="3">
    <location>
        <begin position="674"/>
        <end position="700"/>
    </location>
</feature>
<feature type="compositionally biased region" description="Polar residues" evidence="6">
    <location>
        <begin position="1"/>
        <end position="18"/>
    </location>
</feature>
<feature type="compositionally biased region" description="Polar residues" evidence="6">
    <location>
        <begin position="25"/>
        <end position="45"/>
    </location>
</feature>
<feature type="compositionally biased region" description="Basic and acidic residues" evidence="6">
    <location>
        <begin position="69"/>
        <end position="79"/>
    </location>
</feature>
<feature type="compositionally biased region" description="Basic and acidic residues" evidence="6">
    <location>
        <begin position="240"/>
        <end position="252"/>
    </location>
</feature>
<feature type="compositionally biased region" description="Basic and acidic residues" evidence="6">
    <location>
        <begin position="278"/>
        <end position="290"/>
    </location>
</feature>
<feature type="compositionally biased region" description="Pro residues" evidence="6">
    <location>
        <begin position="345"/>
        <end position="363"/>
    </location>
</feature>
<feature type="compositionally biased region" description="Polar residues" evidence="6">
    <location>
        <begin position="374"/>
        <end position="387"/>
    </location>
</feature>
<feature type="compositionally biased region" description="Pro residues" evidence="6">
    <location>
        <begin position="392"/>
        <end position="424"/>
    </location>
</feature>
<feature type="compositionally biased region" description="Acidic residues" evidence="6">
    <location>
        <begin position="451"/>
        <end position="465"/>
    </location>
</feature>
<feature type="compositionally biased region" description="Basic and acidic residues" evidence="6">
    <location>
        <begin position="466"/>
        <end position="501"/>
    </location>
</feature>
<feature type="compositionally biased region" description="Acidic residues" evidence="6">
    <location>
        <begin position="620"/>
        <end position="635"/>
    </location>
</feature>
<feature type="compositionally biased region" description="Acidic residues" evidence="6">
    <location>
        <begin position="646"/>
        <end position="656"/>
    </location>
</feature>
<feature type="modified residue" description="N6-acetyllysine" evidence="30">
    <location>
        <position position="3"/>
    </location>
</feature>
<feature type="modified residue" description="Phosphoserine" evidence="2">
    <location>
        <position position="28"/>
    </location>
</feature>
<feature type="modified residue" description="Phosphoserine" evidence="29 31 32">
    <location>
        <position position="46"/>
    </location>
</feature>
<feature type="modified residue" description="Phosphoserine" evidence="32">
    <location>
        <position position="225"/>
    </location>
</feature>
<feature type="modified residue" description="Phosphoserine" evidence="32">
    <location>
        <position position="329"/>
    </location>
</feature>
<feature type="modified residue" description="Phosphoserine" evidence="31 32">
    <location>
        <position position="457"/>
    </location>
</feature>
<feature type="modified residue" description="Phosphotyrosine" evidence="31">
    <location>
        <position position="571"/>
    </location>
</feature>
<feature type="modified residue" description="Phosphoserine" evidence="31">
    <location>
        <position position="573"/>
    </location>
</feature>
<feature type="modified residue" description="Phosphoserine" evidence="2">
    <location>
        <position position="580"/>
    </location>
</feature>
<feature type="modified residue" description="Phosphotyrosine" evidence="31">
    <location>
        <position position="651"/>
    </location>
</feature>
<feature type="splice variant" id="VSP_047288" description="In isoform 3." evidence="25">
    <original>M</original>
    <variation>MDGKADVKSLM</variation>
    <location>
        <position position="1"/>
    </location>
</feature>
<feature type="splice variant" id="VSP_042309" description="In isoform FYB-130 and isoform 3." evidence="24 25 26">
    <original>G</original>
    <variation>GSTLQVQEKSNTWSWGILKMLKGKDDRKKSIREKPKVSDSDNNEGSS</variation>
    <location>
        <position position="636"/>
    </location>
</feature>
<feature type="sequence variant" id="VAR_056880" description="In dbSNP:rs1642515.">
    <original>P</original>
    <variation>L</variation>
    <location>
        <position position="51"/>
    </location>
</feature>
<feature type="sequence variant" id="VAR_078810" description="In THC3." evidence="17">
    <location>
        <begin position="131"/>
        <end position="783"/>
    </location>
</feature>
<feature type="sequence variant" id="VAR_056881" description="In dbSNP:rs3749741.">
    <original>K</original>
    <variation>R</variation>
    <location>
        <position position="332"/>
    </location>
</feature>
<feature type="sequence variant" id="VAR_060592" description="In dbSNP:rs379707." evidence="7 10 11 19 20 31">
    <original>V</original>
    <variation>F</variation>
    <location>
        <position position="672"/>
    </location>
</feature>
<feature type="sequence conflict" description="In Ref. 4; BAF83092." evidence="27" ref="4">
    <original>N</original>
    <variation>S</variation>
    <location>
        <position position="27"/>
    </location>
</feature>
<feature type="sequence conflict" description="In Ref. 2; AAC51300." evidence="27" ref="2">
    <original>P</original>
    <variation>L</variation>
    <location>
        <position position="273"/>
    </location>
</feature>
<feature type="sequence conflict" description="In Ref. 1; AAB62226." evidence="27" ref="1">
    <original>L</original>
    <variation>V</variation>
    <location>
        <position position="275"/>
    </location>
</feature>
<feature type="sequence conflict" description="In Ref. 4; BAF83092." evidence="27" ref="4">
    <original>R</original>
    <variation>C</variation>
    <location>
        <position position="541"/>
    </location>
</feature>
<feature type="sequence conflict" description="In Ref. 4; BAF83092." evidence="27" ref="4">
    <original>K</original>
    <variation>E</variation>
    <location>
        <position position="674"/>
    </location>
</feature>
<feature type="sequence conflict" description="In Ref. 4; BAF83092." evidence="27" ref="4">
    <original>V</original>
    <variation>A</variation>
    <location>
        <position position="729"/>
    </location>
</feature>
<feature type="helix" evidence="34">
    <location>
        <begin position="498"/>
        <end position="504"/>
    </location>
</feature>
<feature type="strand" evidence="34">
    <location>
        <begin position="514"/>
        <end position="520"/>
    </location>
</feature>
<feature type="strand" evidence="35">
    <location>
        <begin position="526"/>
        <end position="528"/>
    </location>
</feature>
<feature type="strand" evidence="34">
    <location>
        <begin position="537"/>
        <end position="541"/>
    </location>
</feature>
<feature type="strand" evidence="34">
    <location>
        <begin position="546"/>
        <end position="548"/>
    </location>
</feature>
<feature type="strand" evidence="34">
    <location>
        <begin position="551"/>
        <end position="553"/>
    </location>
</feature>
<feature type="strand" evidence="35">
    <location>
        <begin position="559"/>
        <end position="562"/>
    </location>
</feature>
<feature type="helix" evidence="34">
    <location>
        <begin position="564"/>
        <end position="566"/>
    </location>
</feature>
<feature type="strand" evidence="34">
    <location>
        <begin position="567"/>
        <end position="569"/>
    </location>
</feature>
<feature type="helix" evidence="35">
    <location>
        <begin position="572"/>
        <end position="575"/>
    </location>
</feature>
<feature type="helix" evidence="33">
    <location>
        <begin position="690"/>
        <end position="698"/>
    </location>
</feature>
<feature type="strand" evidence="33">
    <location>
        <begin position="736"/>
        <end position="750"/>
    </location>
</feature>
<feature type="turn" evidence="33">
    <location>
        <begin position="751"/>
        <end position="753"/>
    </location>
</feature>
<feature type="strand" evidence="33">
    <location>
        <begin position="754"/>
        <end position="759"/>
    </location>
</feature>
<feature type="helix" evidence="33">
    <location>
        <begin position="760"/>
        <end position="762"/>
    </location>
</feature>
<dbReference type="EMBL" id="AF001862">
    <property type="protein sequence ID" value="AAB62226.1"/>
    <property type="molecule type" value="mRNA"/>
</dbReference>
<dbReference type="EMBL" id="U93049">
    <property type="protein sequence ID" value="AAC51300.1"/>
    <property type="molecule type" value="mRNA"/>
</dbReference>
<dbReference type="EMBL" id="AF198052">
    <property type="protein sequence ID" value="AAF62400.1"/>
    <property type="molecule type" value="mRNA"/>
</dbReference>
<dbReference type="EMBL" id="AK290403">
    <property type="protein sequence ID" value="BAF83092.1"/>
    <property type="molecule type" value="mRNA"/>
</dbReference>
<dbReference type="EMBL" id="AK297077">
    <property type="protein sequence ID" value="BAG59594.1"/>
    <property type="molecule type" value="mRNA"/>
</dbReference>
<dbReference type="EMBL" id="AC008964">
    <property type="status" value="NOT_ANNOTATED_CDS"/>
    <property type="molecule type" value="Genomic_DNA"/>
</dbReference>
<dbReference type="EMBL" id="AC010633">
    <property type="status" value="NOT_ANNOTATED_CDS"/>
    <property type="molecule type" value="Genomic_DNA"/>
</dbReference>
<dbReference type="EMBL" id="AC025471">
    <property type="status" value="NOT_ANNOTATED_CDS"/>
    <property type="molecule type" value="Genomic_DNA"/>
</dbReference>
<dbReference type="EMBL" id="CH471119">
    <property type="protein sequence ID" value="EAW55984.1"/>
    <property type="molecule type" value="Genomic_DNA"/>
</dbReference>
<dbReference type="EMBL" id="BC117449">
    <property type="protein sequence ID" value="AAI17450.1"/>
    <property type="molecule type" value="mRNA"/>
</dbReference>
<dbReference type="EMBL" id="BC143645">
    <property type="protein sequence ID" value="AAI43646.1"/>
    <property type="molecule type" value="mRNA"/>
</dbReference>
<dbReference type="CCDS" id="CCDS47200.1">
    <molecule id="O15117-1"/>
</dbReference>
<dbReference type="CCDS" id="CCDS54848.1">
    <molecule id="O15117-2"/>
</dbReference>
<dbReference type="CCDS" id="CCDS58945.1">
    <molecule id="O15117-3"/>
</dbReference>
<dbReference type="RefSeq" id="NP_001230022.1">
    <molecule id="O15117-3"/>
    <property type="nucleotide sequence ID" value="NM_001243093.2"/>
</dbReference>
<dbReference type="RefSeq" id="NP_001336262.1">
    <molecule id="O15117-2"/>
    <property type="nucleotide sequence ID" value="NM_001349333.2"/>
</dbReference>
<dbReference type="RefSeq" id="NP_001456.3">
    <molecule id="O15117-2"/>
    <property type="nucleotide sequence ID" value="NM_001465.4"/>
</dbReference>
<dbReference type="RefSeq" id="NP_955367.1">
    <molecule id="O15117-1"/>
    <property type="nucleotide sequence ID" value="NM_199335.5"/>
</dbReference>
<dbReference type="RefSeq" id="XP_006714527.1">
    <molecule id="O15117-2"/>
    <property type="nucleotide sequence ID" value="XM_006714464.4"/>
</dbReference>
<dbReference type="RefSeq" id="XP_006714528.1">
    <property type="nucleotide sequence ID" value="XM_006714465.2"/>
</dbReference>
<dbReference type="RefSeq" id="XP_006714529.1">
    <property type="nucleotide sequence ID" value="XM_006714466.2"/>
</dbReference>
<dbReference type="RefSeq" id="XP_011512310.1">
    <molecule id="O15117-3"/>
    <property type="nucleotide sequence ID" value="XM_011514008.3"/>
</dbReference>
<dbReference type="RefSeq" id="XP_011512311.1">
    <molecule id="O15117-2"/>
    <property type="nucleotide sequence ID" value="XM_011514009.1"/>
</dbReference>
<dbReference type="RefSeq" id="XP_011512312.1">
    <molecule id="O15117-2"/>
    <property type="nucleotide sequence ID" value="XM_011514010.2"/>
</dbReference>
<dbReference type="RefSeq" id="XP_047273027.1">
    <molecule id="O15117-3"/>
    <property type="nucleotide sequence ID" value="XM_047417071.1"/>
</dbReference>
<dbReference type="RefSeq" id="XP_047273028.1">
    <molecule id="O15117-2"/>
    <property type="nucleotide sequence ID" value="XM_047417072.1"/>
</dbReference>
<dbReference type="RefSeq" id="XP_047273029.1">
    <molecule id="O15117-2"/>
    <property type="nucleotide sequence ID" value="XM_047417073.1"/>
</dbReference>
<dbReference type="RefSeq" id="XP_047273030.1">
    <molecule id="O15117-2"/>
    <property type="nucleotide sequence ID" value="XM_047417074.1"/>
</dbReference>
<dbReference type="PDB" id="1RI9">
    <property type="method" value="NMR"/>
    <property type="chains" value="A=683-771"/>
</dbReference>
<dbReference type="PDB" id="2GTJ">
    <property type="method" value="NMR"/>
    <property type="chains" value="A=486-579"/>
</dbReference>
<dbReference type="PDB" id="2GTO">
    <property type="method" value="NMR"/>
    <property type="chains" value="A=486-579"/>
</dbReference>
<dbReference type="PDBsum" id="1RI9"/>
<dbReference type="PDBsum" id="2GTJ"/>
<dbReference type="PDBsum" id="2GTO"/>
<dbReference type="BMRB" id="O15117"/>
<dbReference type="SMR" id="O15117"/>
<dbReference type="BioGRID" id="108809">
    <property type="interactions" value="22"/>
</dbReference>
<dbReference type="CORUM" id="O15117"/>
<dbReference type="DIP" id="DIP-42204N"/>
<dbReference type="ELM" id="O15117"/>
<dbReference type="FunCoup" id="O15117">
    <property type="interactions" value="635"/>
</dbReference>
<dbReference type="IntAct" id="O15117">
    <property type="interactions" value="29"/>
</dbReference>
<dbReference type="MINT" id="O15117"/>
<dbReference type="STRING" id="9606.ENSP00000493623"/>
<dbReference type="GlyCosmos" id="O15117">
    <property type="glycosylation" value="3 sites, 1 glycan"/>
</dbReference>
<dbReference type="GlyGen" id="O15117">
    <property type="glycosylation" value="5 sites, 1 N-linked glycan (1 site), 1 O-linked glycan (4 sites)"/>
</dbReference>
<dbReference type="iPTMnet" id="O15117"/>
<dbReference type="PhosphoSitePlus" id="O15117"/>
<dbReference type="BioMuta" id="FYB1"/>
<dbReference type="OGP" id="O15117"/>
<dbReference type="jPOST" id="O15117"/>
<dbReference type="MassIVE" id="O15117"/>
<dbReference type="PaxDb" id="9606-ENSP00000427114"/>
<dbReference type="PeptideAtlas" id="O15117"/>
<dbReference type="ProteomicsDB" id="4545"/>
<dbReference type="ProteomicsDB" id="48451">
    <molecule id="O15117-1"/>
</dbReference>
<dbReference type="ProteomicsDB" id="48452">
    <molecule id="O15117-2"/>
</dbReference>
<dbReference type="Pumba" id="O15117"/>
<dbReference type="Antibodypedia" id="23110">
    <property type="antibodies" value="349 antibodies from 37 providers"/>
</dbReference>
<dbReference type="DNASU" id="2533"/>
<dbReference type="Ensembl" id="ENST00000351578.12">
    <molecule id="O15117-1"/>
    <property type="protein sequence ID" value="ENSP00000316460.7"/>
    <property type="gene ID" value="ENSG00000082074.19"/>
</dbReference>
<dbReference type="Ensembl" id="ENST00000512982.4">
    <molecule id="O15117-2"/>
    <property type="protein sequence ID" value="ENSP00000425845.3"/>
    <property type="gene ID" value="ENSG00000082074.19"/>
</dbReference>
<dbReference type="Ensembl" id="ENST00000515010.5">
    <molecule id="O15117-1"/>
    <property type="protein sequence ID" value="ENSP00000426346.1"/>
    <property type="gene ID" value="ENSG00000082074.19"/>
</dbReference>
<dbReference type="Ensembl" id="ENST00000646045.2">
    <molecule id="O15117-3"/>
    <property type="protein sequence ID" value="ENSP00000493623.1"/>
    <property type="gene ID" value="ENSG00000082074.19"/>
</dbReference>
<dbReference type="GeneID" id="2533"/>
<dbReference type="KEGG" id="hsa:2533"/>
<dbReference type="MANE-Select" id="ENST00000512982.4">
    <molecule id="O15117-2"/>
    <property type="protein sequence ID" value="ENSP00000425845.3"/>
    <property type="RefSeq nucleotide sequence ID" value="NM_001465.6"/>
    <property type="RefSeq protein sequence ID" value="NP_001456.3"/>
</dbReference>
<dbReference type="UCSC" id="uc003jls.4">
    <molecule id="O15117-1"/>
    <property type="organism name" value="human"/>
</dbReference>
<dbReference type="AGR" id="HGNC:4036"/>
<dbReference type="CTD" id="2533"/>
<dbReference type="DisGeNET" id="2533"/>
<dbReference type="GeneCards" id="FYB1"/>
<dbReference type="HGNC" id="HGNC:4036">
    <property type="gene designation" value="FYB1"/>
</dbReference>
<dbReference type="HPA" id="ENSG00000082074">
    <property type="expression patterns" value="Group enriched (bone marrow, lymphoid tissue)"/>
</dbReference>
<dbReference type="MalaCards" id="FYB1"/>
<dbReference type="MIM" id="273900">
    <property type="type" value="phenotype"/>
</dbReference>
<dbReference type="MIM" id="602731">
    <property type="type" value="gene"/>
</dbReference>
<dbReference type="neXtProt" id="NX_O15117"/>
<dbReference type="OpenTargets" id="ENSG00000082074"/>
<dbReference type="Orphanet" id="566192">
    <property type="disease" value="Congenital autosomal recessive small-platelet thrombocytopenia"/>
</dbReference>
<dbReference type="PharmGKB" id="PA28452"/>
<dbReference type="VEuPathDB" id="HostDB:ENSG00000082074"/>
<dbReference type="eggNOG" id="ENOG502QTTQ">
    <property type="taxonomic scope" value="Eukaryota"/>
</dbReference>
<dbReference type="GeneTree" id="ENSGT00530000063460"/>
<dbReference type="HOGENOM" id="CLU_339375_0_0_1"/>
<dbReference type="InParanoid" id="O15117"/>
<dbReference type="OMA" id="KSSTWSW"/>
<dbReference type="OrthoDB" id="9396701at2759"/>
<dbReference type="PAN-GO" id="O15117">
    <property type="GO annotations" value="4 GO annotations based on evolutionary models"/>
</dbReference>
<dbReference type="PhylomeDB" id="O15117"/>
<dbReference type="TreeFam" id="TF337003"/>
<dbReference type="PathwayCommons" id="O15117"/>
<dbReference type="Reactome" id="R-HSA-202433">
    <property type="pathway name" value="Generation of second messenger molecules"/>
</dbReference>
<dbReference type="Reactome" id="R-HSA-391160">
    <property type="pathway name" value="Signal regulatory protein family interactions"/>
</dbReference>
<dbReference type="SignaLink" id="O15117"/>
<dbReference type="SIGNOR" id="O15117"/>
<dbReference type="BioGRID-ORCS" id="2533">
    <property type="hits" value="4 hits in 1152 CRISPR screens"/>
</dbReference>
<dbReference type="ChiTaRS" id="FYB">
    <property type="organism name" value="human"/>
</dbReference>
<dbReference type="EvolutionaryTrace" id="O15117"/>
<dbReference type="GeneWiki" id="FYB"/>
<dbReference type="GenomeRNAi" id="2533"/>
<dbReference type="Pharos" id="O15117">
    <property type="development level" value="Tbio"/>
</dbReference>
<dbReference type="PRO" id="PR:O15117"/>
<dbReference type="Proteomes" id="UP000005640">
    <property type="component" value="Chromosome 5"/>
</dbReference>
<dbReference type="RNAct" id="O15117">
    <property type="molecule type" value="protein"/>
</dbReference>
<dbReference type="Bgee" id="ENSG00000082074">
    <property type="expression patterns" value="Expressed in monocyte and 182 other cell types or tissues"/>
</dbReference>
<dbReference type="ExpressionAtlas" id="O15117">
    <property type="expression patterns" value="baseline and differential"/>
</dbReference>
<dbReference type="GO" id="GO:0015629">
    <property type="term" value="C:actin cytoskeleton"/>
    <property type="evidence" value="ECO:0000304"/>
    <property type="project" value="UniProtKB"/>
</dbReference>
<dbReference type="GO" id="GO:0070161">
    <property type="term" value="C:anchoring junction"/>
    <property type="evidence" value="ECO:0007669"/>
    <property type="project" value="UniProtKB-SubCell"/>
</dbReference>
<dbReference type="GO" id="GO:0005829">
    <property type="term" value="C:cytosol"/>
    <property type="evidence" value="ECO:0000304"/>
    <property type="project" value="Reactome"/>
</dbReference>
<dbReference type="GO" id="GO:0005634">
    <property type="term" value="C:nucleus"/>
    <property type="evidence" value="ECO:0000304"/>
    <property type="project" value="ProtInc"/>
</dbReference>
<dbReference type="GO" id="GO:0005886">
    <property type="term" value="C:plasma membrane"/>
    <property type="evidence" value="ECO:0000318"/>
    <property type="project" value="GO_Central"/>
</dbReference>
<dbReference type="GO" id="GO:0032991">
    <property type="term" value="C:protein-containing complex"/>
    <property type="evidence" value="ECO:0007669"/>
    <property type="project" value="Ensembl"/>
</dbReference>
<dbReference type="GO" id="GO:0008289">
    <property type="term" value="F:lipid binding"/>
    <property type="evidence" value="ECO:0007669"/>
    <property type="project" value="InterPro"/>
</dbReference>
<dbReference type="GO" id="GO:0005102">
    <property type="term" value="F:signaling receptor binding"/>
    <property type="evidence" value="ECO:0000304"/>
    <property type="project" value="UniProtKB"/>
</dbReference>
<dbReference type="GO" id="GO:0006955">
    <property type="term" value="P:immune response"/>
    <property type="evidence" value="ECO:0000304"/>
    <property type="project" value="ProtInc"/>
</dbReference>
<dbReference type="GO" id="GO:0007229">
    <property type="term" value="P:integrin-mediated signaling pathway"/>
    <property type="evidence" value="ECO:0000318"/>
    <property type="project" value="GO_Central"/>
</dbReference>
<dbReference type="GO" id="GO:0072659">
    <property type="term" value="P:protein localization to plasma membrane"/>
    <property type="evidence" value="ECO:0000318"/>
    <property type="project" value="GO_Central"/>
</dbReference>
<dbReference type="GO" id="GO:0050852">
    <property type="term" value="P:T cell receptor signaling pathway"/>
    <property type="evidence" value="ECO:0000318"/>
    <property type="project" value="GO_Central"/>
</dbReference>
<dbReference type="CDD" id="cd11867">
    <property type="entry name" value="hSH3_ADAP"/>
    <property type="match status" value="1"/>
</dbReference>
<dbReference type="FunFam" id="2.30.30.40:FF:000156">
    <property type="entry name" value="FYN-binding protein-like isoform X1"/>
    <property type="match status" value="1"/>
</dbReference>
<dbReference type="FunFam" id="2.30.30.40:FF:000133">
    <property type="entry name" value="FYN-binding protein-like isoform X2"/>
    <property type="match status" value="1"/>
</dbReference>
<dbReference type="Gene3D" id="2.30.30.40">
    <property type="entry name" value="SH3 Domains"/>
    <property type="match status" value="2"/>
</dbReference>
<dbReference type="InterPro" id="IPR043443">
    <property type="entry name" value="FYB1/2-like"/>
</dbReference>
<dbReference type="InterPro" id="IPR035540">
    <property type="entry name" value="FYB_hSH3"/>
</dbReference>
<dbReference type="InterPro" id="IPR029294">
    <property type="entry name" value="hSH3"/>
</dbReference>
<dbReference type="InterPro" id="IPR036028">
    <property type="entry name" value="SH3-like_dom_sf"/>
</dbReference>
<dbReference type="InterPro" id="IPR001452">
    <property type="entry name" value="SH3_domain"/>
</dbReference>
<dbReference type="PANTHER" id="PTHR16830:SF13">
    <property type="entry name" value="FYN-BINDING PROTEIN 1"/>
    <property type="match status" value="1"/>
</dbReference>
<dbReference type="PANTHER" id="PTHR16830">
    <property type="entry name" value="SH2 CONTAINING ADAPTOR PRAM-1 RELATED"/>
    <property type="match status" value="1"/>
</dbReference>
<dbReference type="Pfam" id="PF14603">
    <property type="entry name" value="hSH3"/>
    <property type="match status" value="1"/>
</dbReference>
<dbReference type="Pfam" id="PF07653">
    <property type="entry name" value="SH3_2"/>
    <property type="match status" value="1"/>
</dbReference>
<dbReference type="SMART" id="SM00326">
    <property type="entry name" value="SH3"/>
    <property type="match status" value="1"/>
</dbReference>
<dbReference type="SUPFAM" id="SSF50044">
    <property type="entry name" value="SH3-domain"/>
    <property type="match status" value="2"/>
</dbReference>
<dbReference type="PROSITE" id="PS50002">
    <property type="entry name" value="SH3"/>
    <property type="match status" value="2"/>
</dbReference>
<reference key="1">
    <citation type="journal article" date="1997" name="Proc. Natl. Acad. Sci. U.S.A.">
        <title>Cloning of a novel T-cell protein FYB that binds FYN and SH2-domain-containing leukocyte protein 76 and modulates interleukin 2 production.</title>
        <authorList>
            <person name="da Silva A.J."/>
            <person name="Li Z."/>
            <person name="de Vera C."/>
            <person name="Canto E."/>
            <person name="Findell P."/>
            <person name="Rudd C.E."/>
        </authorList>
    </citation>
    <scope>NUCLEOTIDE SEQUENCE [MRNA] (ISOFORM FYB-120)</scope>
    <scope>INTERACTION WITH FYN AND LCP2</scope>
    <scope>VARIANT PHE-672</scope>
    <source>
        <tissue>Tonsil</tissue>
    </source>
</reference>
<reference key="2">
    <citation type="journal article" date="1997" name="J. Biol. Chem.">
        <title>Molecular cloning of SLAP-130, an SLP-76-associated substrate of the T cell antigen receptor-stimulated protein tyrosine kinases.</title>
        <authorList>
            <person name="Musci M.A."/>
            <person name="Hendricks-Taylor L.R."/>
            <person name="Motto D.G."/>
            <person name="Paskind M."/>
            <person name="Kamens J."/>
            <person name="Turck C.W."/>
            <person name="Koretzky G.A."/>
        </authorList>
    </citation>
    <scope>NUCLEOTIDE SEQUENCE [MRNA] (ISOFORM FYB-120)</scope>
    <scope>PROTEIN SEQUENCE OF 363-370</scope>
    <scope>VARIANT PHE-672</scope>
</reference>
<reference key="3">
    <citation type="journal article" date="2000" name="J. Cell Biol.">
        <title>Fyn-binding protein (Fyb)/SLP-76-associated protein (SLAP), Ena/vasodilator-stimulated phosphoprotein (VASP) proteins and the Arp2/3 complex link T cell receptor (TCR) signaling to the actin cytoskeleton.</title>
        <authorList>
            <person name="Krause M."/>
            <person name="Sechi A.S."/>
            <person name="Konradt M."/>
            <person name="Monner D."/>
            <person name="Gertler F.B."/>
            <person name="Wehland J."/>
        </authorList>
    </citation>
    <scope>NUCLEOTIDE SEQUENCE [MRNA] (ISOFORM FYB-130)</scope>
    <scope>FUNCTION</scope>
    <scope>INTERACTION WITH EVL</scope>
    <scope>VARIANT PHE-672</scope>
</reference>
<reference key="4">
    <citation type="journal article" date="2004" name="Nat. Genet.">
        <title>Complete sequencing and characterization of 21,243 full-length human cDNAs.</title>
        <authorList>
            <person name="Ota T."/>
            <person name="Suzuki Y."/>
            <person name="Nishikawa T."/>
            <person name="Otsuki T."/>
            <person name="Sugiyama T."/>
            <person name="Irie R."/>
            <person name="Wakamatsu A."/>
            <person name="Hayashi K."/>
            <person name="Sato H."/>
            <person name="Nagai K."/>
            <person name="Kimura K."/>
            <person name="Makita H."/>
            <person name="Sekine M."/>
            <person name="Obayashi M."/>
            <person name="Nishi T."/>
            <person name="Shibahara T."/>
            <person name="Tanaka T."/>
            <person name="Ishii S."/>
            <person name="Yamamoto J."/>
            <person name="Saito K."/>
            <person name="Kawai Y."/>
            <person name="Isono Y."/>
            <person name="Nakamura Y."/>
            <person name="Nagahari K."/>
            <person name="Murakami K."/>
            <person name="Yasuda T."/>
            <person name="Iwayanagi T."/>
            <person name="Wagatsuma M."/>
            <person name="Shiratori A."/>
            <person name="Sudo H."/>
            <person name="Hosoiri T."/>
            <person name="Kaku Y."/>
            <person name="Kodaira H."/>
            <person name="Kondo H."/>
            <person name="Sugawara M."/>
            <person name="Takahashi M."/>
            <person name="Kanda K."/>
            <person name="Yokoi T."/>
            <person name="Furuya T."/>
            <person name="Kikkawa E."/>
            <person name="Omura Y."/>
            <person name="Abe K."/>
            <person name="Kamihara K."/>
            <person name="Katsuta N."/>
            <person name="Sato K."/>
            <person name="Tanikawa M."/>
            <person name="Yamazaki M."/>
            <person name="Ninomiya K."/>
            <person name="Ishibashi T."/>
            <person name="Yamashita H."/>
            <person name="Murakawa K."/>
            <person name="Fujimori K."/>
            <person name="Tanai H."/>
            <person name="Kimata M."/>
            <person name="Watanabe M."/>
            <person name="Hiraoka S."/>
            <person name="Chiba Y."/>
            <person name="Ishida S."/>
            <person name="Ono Y."/>
            <person name="Takiguchi S."/>
            <person name="Watanabe S."/>
            <person name="Yosida M."/>
            <person name="Hotuta T."/>
            <person name="Kusano J."/>
            <person name="Kanehori K."/>
            <person name="Takahashi-Fujii A."/>
            <person name="Hara H."/>
            <person name="Tanase T.-O."/>
            <person name="Nomura Y."/>
            <person name="Togiya S."/>
            <person name="Komai F."/>
            <person name="Hara R."/>
            <person name="Takeuchi K."/>
            <person name="Arita M."/>
            <person name="Imose N."/>
            <person name="Musashino K."/>
            <person name="Yuuki H."/>
            <person name="Oshima A."/>
            <person name="Sasaki N."/>
            <person name="Aotsuka S."/>
            <person name="Yoshikawa Y."/>
            <person name="Matsunawa H."/>
            <person name="Ichihara T."/>
            <person name="Shiohata N."/>
            <person name="Sano S."/>
            <person name="Moriya S."/>
            <person name="Momiyama H."/>
            <person name="Satoh N."/>
            <person name="Takami S."/>
            <person name="Terashima Y."/>
            <person name="Suzuki O."/>
            <person name="Nakagawa S."/>
            <person name="Senoh A."/>
            <person name="Mizoguchi H."/>
            <person name="Goto Y."/>
            <person name="Shimizu F."/>
            <person name="Wakebe H."/>
            <person name="Hishigaki H."/>
            <person name="Watanabe T."/>
            <person name="Sugiyama A."/>
            <person name="Takemoto M."/>
            <person name="Kawakami B."/>
            <person name="Yamazaki M."/>
            <person name="Watanabe K."/>
            <person name="Kumagai A."/>
            <person name="Itakura S."/>
            <person name="Fukuzumi Y."/>
            <person name="Fujimori Y."/>
            <person name="Komiyama M."/>
            <person name="Tashiro H."/>
            <person name="Tanigami A."/>
            <person name="Fujiwara T."/>
            <person name="Ono T."/>
            <person name="Yamada K."/>
            <person name="Fujii Y."/>
            <person name="Ozaki K."/>
            <person name="Hirao M."/>
            <person name="Ohmori Y."/>
            <person name="Kawabata A."/>
            <person name="Hikiji T."/>
            <person name="Kobatake N."/>
            <person name="Inagaki H."/>
            <person name="Ikema Y."/>
            <person name="Okamoto S."/>
            <person name="Okitani R."/>
            <person name="Kawakami T."/>
            <person name="Noguchi S."/>
            <person name="Itoh T."/>
            <person name="Shigeta K."/>
            <person name="Senba T."/>
            <person name="Matsumura K."/>
            <person name="Nakajima Y."/>
            <person name="Mizuno T."/>
            <person name="Morinaga M."/>
            <person name="Sasaki M."/>
            <person name="Togashi T."/>
            <person name="Oyama M."/>
            <person name="Hata H."/>
            <person name="Watanabe M."/>
            <person name="Komatsu T."/>
            <person name="Mizushima-Sugano J."/>
            <person name="Satoh T."/>
            <person name="Shirai Y."/>
            <person name="Takahashi Y."/>
            <person name="Nakagawa K."/>
            <person name="Okumura K."/>
            <person name="Nagase T."/>
            <person name="Nomura N."/>
            <person name="Kikuchi H."/>
            <person name="Masuho Y."/>
            <person name="Yamashita R."/>
            <person name="Nakai K."/>
            <person name="Yada T."/>
            <person name="Nakamura Y."/>
            <person name="Ohara O."/>
            <person name="Isogai T."/>
            <person name="Sugano S."/>
        </authorList>
    </citation>
    <scope>NUCLEOTIDE SEQUENCE [LARGE SCALE MRNA] (ISOFORMS FYB-130 AND 3)</scope>
    <scope>VARIANT PHE-672</scope>
    <source>
        <tissue>Umbilical cord blood</tissue>
    </source>
</reference>
<reference key="5">
    <citation type="journal article" date="2004" name="Nature">
        <title>The DNA sequence and comparative analysis of human chromosome 5.</title>
        <authorList>
            <person name="Schmutz J."/>
            <person name="Martin J."/>
            <person name="Terry A."/>
            <person name="Couronne O."/>
            <person name="Grimwood J."/>
            <person name="Lowry S."/>
            <person name="Gordon L.A."/>
            <person name="Scott D."/>
            <person name="Xie G."/>
            <person name="Huang W."/>
            <person name="Hellsten U."/>
            <person name="Tran-Gyamfi M."/>
            <person name="She X."/>
            <person name="Prabhakar S."/>
            <person name="Aerts A."/>
            <person name="Altherr M."/>
            <person name="Bajorek E."/>
            <person name="Black S."/>
            <person name="Branscomb E."/>
            <person name="Caoile C."/>
            <person name="Challacombe J.F."/>
            <person name="Chan Y.M."/>
            <person name="Denys M."/>
            <person name="Detter J.C."/>
            <person name="Escobar J."/>
            <person name="Flowers D."/>
            <person name="Fotopulos D."/>
            <person name="Glavina T."/>
            <person name="Gomez M."/>
            <person name="Gonzales E."/>
            <person name="Goodstein D."/>
            <person name="Grigoriev I."/>
            <person name="Groza M."/>
            <person name="Hammon N."/>
            <person name="Hawkins T."/>
            <person name="Haydu L."/>
            <person name="Israni S."/>
            <person name="Jett J."/>
            <person name="Kadner K."/>
            <person name="Kimball H."/>
            <person name="Kobayashi A."/>
            <person name="Lopez F."/>
            <person name="Lou Y."/>
            <person name="Martinez D."/>
            <person name="Medina C."/>
            <person name="Morgan J."/>
            <person name="Nandkeshwar R."/>
            <person name="Noonan J.P."/>
            <person name="Pitluck S."/>
            <person name="Pollard M."/>
            <person name="Predki P."/>
            <person name="Priest J."/>
            <person name="Ramirez L."/>
            <person name="Retterer J."/>
            <person name="Rodriguez A."/>
            <person name="Rogers S."/>
            <person name="Salamov A."/>
            <person name="Salazar A."/>
            <person name="Thayer N."/>
            <person name="Tice H."/>
            <person name="Tsai M."/>
            <person name="Ustaszewska A."/>
            <person name="Vo N."/>
            <person name="Wheeler J."/>
            <person name="Wu K."/>
            <person name="Yang J."/>
            <person name="Dickson M."/>
            <person name="Cheng J.-F."/>
            <person name="Eichler E.E."/>
            <person name="Olsen A."/>
            <person name="Pennacchio L.A."/>
            <person name="Rokhsar D.S."/>
            <person name="Richardson P."/>
            <person name="Lucas S.M."/>
            <person name="Myers R.M."/>
            <person name="Rubin E.M."/>
        </authorList>
    </citation>
    <scope>NUCLEOTIDE SEQUENCE [LARGE SCALE GENOMIC DNA]</scope>
</reference>
<reference key="6">
    <citation type="submission" date="2005-07" db="EMBL/GenBank/DDBJ databases">
        <authorList>
            <person name="Mural R.J."/>
            <person name="Istrail S."/>
            <person name="Sutton G."/>
            <person name="Florea L."/>
            <person name="Halpern A.L."/>
            <person name="Mobarry C.M."/>
            <person name="Lippert R."/>
            <person name="Walenz B."/>
            <person name="Shatkay H."/>
            <person name="Dew I."/>
            <person name="Miller J.R."/>
            <person name="Flanigan M.J."/>
            <person name="Edwards N.J."/>
            <person name="Bolanos R."/>
            <person name="Fasulo D."/>
            <person name="Halldorsson B.V."/>
            <person name="Hannenhalli S."/>
            <person name="Turner R."/>
            <person name="Yooseph S."/>
            <person name="Lu F."/>
            <person name="Nusskern D.R."/>
            <person name="Shue B.C."/>
            <person name="Zheng X.H."/>
            <person name="Zhong F."/>
            <person name="Delcher A.L."/>
            <person name="Huson D.H."/>
            <person name="Kravitz S.A."/>
            <person name="Mouchard L."/>
            <person name="Reinert K."/>
            <person name="Remington K.A."/>
            <person name="Clark A.G."/>
            <person name="Waterman M.S."/>
            <person name="Eichler E.E."/>
            <person name="Adams M.D."/>
            <person name="Hunkapiller M.W."/>
            <person name="Myers E.W."/>
            <person name="Venter J.C."/>
        </authorList>
    </citation>
    <scope>NUCLEOTIDE SEQUENCE [LARGE SCALE GENOMIC DNA]</scope>
</reference>
<reference key="7">
    <citation type="journal article" date="2004" name="Genome Res.">
        <title>The status, quality, and expansion of the NIH full-length cDNA project: the Mammalian Gene Collection (MGC).</title>
        <authorList>
            <consortium name="The MGC Project Team"/>
        </authorList>
    </citation>
    <scope>NUCLEOTIDE SEQUENCE [LARGE SCALE MRNA] (ISOFORM FYB-130)</scope>
    <scope>VARIANT PHE-672</scope>
    <source>
        <tissue>Cerebellum</tissue>
    </source>
</reference>
<reference key="8">
    <citation type="journal article" date="1998" name="FEBS Lett.">
        <title>SKAP-HOM, a novel adaptor protein homologous to the FYN-associated protein SKAP55.</title>
        <authorList>
            <person name="Marie-Cardine A."/>
            <person name="Verhagen A.M."/>
            <person name="Eckerskorn C."/>
            <person name="Schraven B."/>
        </authorList>
    </citation>
    <scope>INTERACTION WITH SKAP1 AND SKAP2</scope>
</reference>
<reference key="9">
    <citation type="journal article" date="1998" name="J. Biol. Chem.">
        <title>Molecular interaction between the Fyn-associated protein SKAP55 and the SLP-76-associated phosphoprotein SLAP-130.</title>
        <authorList>
            <person name="Marie-Cardine A."/>
            <person name="Hendricks-Taylor L.R."/>
            <person name="Boerth N.J."/>
            <person name="Zhao H."/>
            <person name="Schraven B."/>
            <person name="Koretzky G.A."/>
        </authorList>
    </citation>
    <scope>INTERACTION WITH SKAP1</scope>
</reference>
<reference key="10">
    <citation type="journal article" date="1998" name="Proc. Natl. Acad. Sci. U.S.A.">
        <title>FYB (FYN binding protein) serves as a binding partner for lymphoid protein and FYN kinase substrate SKAP55 and a SKAP55-related protein in T cells.</title>
        <authorList>
            <person name="Liu J."/>
            <person name="Kang H."/>
            <person name="Raab M."/>
            <person name="da Silva A.J."/>
            <person name="Kraeft S.-K."/>
            <person name="Rudd C.E."/>
        </authorList>
    </citation>
    <scope>INTERACTION WITH SKAP1 AND SKAP2</scope>
    <scope>SUBCELLULAR LOCATION</scope>
</reference>
<reference key="11">
    <citation type="journal article" date="2000" name="J. Biol. Chem.">
        <title>Interaction of linker for activation of T cells with multiple adapter proteins in platelets activated by the glycoprotein VI-selective ligand, convulxin.</title>
        <authorList>
            <person name="Asazuma N."/>
            <person name="Wilde J.I."/>
            <person name="Berlanga O."/>
            <person name="Leduc M."/>
            <person name="Leo A."/>
            <person name="Schweighoffer E."/>
            <person name="Tybulewicz V."/>
            <person name="Bon C."/>
            <person name="Liu S.K."/>
            <person name="McGlade C.J."/>
            <person name="Schraven B."/>
            <person name="Watson S.P."/>
        </authorList>
    </citation>
    <scope>INTERACTION WITH SKAP2</scope>
</reference>
<reference key="12">
    <citation type="journal article" date="2000" name="EMBO J.">
        <title>SH3 domain recognition of a proline-independent tyrosine-based RKxxYxxY motif in immune cell adaptor SKAP55.</title>
        <authorList>
            <person name="Kang H."/>
            <person name="Freund C."/>
            <person name="Duke-Cohan J.S."/>
            <person name="Musacchio A."/>
            <person name="Wagner G."/>
            <person name="Rudd C.E."/>
        </authorList>
    </citation>
    <scope>INTERACTION WITH SKAP1</scope>
</reference>
<reference key="13">
    <citation type="journal article" date="2004" name="Anal. Chem.">
        <title>Robust phosphoproteomic profiling of tyrosine phosphorylation sites from human T cells using immobilized metal affinity chromatography and tandem mass spectrometry.</title>
        <authorList>
            <person name="Brill L.M."/>
            <person name="Salomon A.R."/>
            <person name="Ficarro S.B."/>
            <person name="Mukherji M."/>
            <person name="Stettler-Gill M."/>
            <person name="Peters E.C."/>
        </authorList>
    </citation>
    <scope>IDENTIFICATION BY MASS SPECTROMETRY [LARGE SCALE ANALYSIS]</scope>
    <source>
        <tissue>Leukemic T-cell</tissue>
    </source>
</reference>
<reference key="14">
    <citation type="journal article" date="2005" name="J. Biol. Chem.">
        <title>Deficiency of ADAP/Fyb/SLAP-130 destabilizes SKAP55 in Jurkat T cells.</title>
        <authorList>
            <person name="Huang Y."/>
            <person name="Norton D.D."/>
            <person name="Precht P."/>
            <person name="Martindale J.L."/>
            <person name="Burkhardt J.K."/>
            <person name="Wange R.L."/>
        </authorList>
    </citation>
    <scope>INTERACTION WITH SKAP1 AND FYN</scope>
    <scope>FUNCTION</scope>
</reference>
<reference key="15">
    <citation type="journal article" date="2006" name="J. Biol. Chem.">
        <title>Regulation and function of SKAP-55 non-canonical motif binding to the SH3c domain of adhesion and degranulation-promoting adaptor protein.</title>
        <authorList>
            <person name="Duke-Cohan J.S."/>
            <person name="Kang H."/>
            <person name="Liu H."/>
            <person name="Rudd C.E."/>
        </authorList>
    </citation>
    <scope>INTERACTION WITH SKAP1</scope>
</reference>
<reference key="16">
    <citation type="journal article" date="2006" name="Mol. Cell. Biol.">
        <title>The ADAP/SKAP55 signaling module regulates T-cell receptor-mediated integrin activation through plasma membrane targeting of Rap1.</title>
        <authorList>
            <person name="Kliche S."/>
            <person name="Breitling D."/>
            <person name="Togni M."/>
            <person name="Pusch R."/>
            <person name="Heuer K."/>
            <person name="Wang X."/>
            <person name="Freund C."/>
            <person name="Kasirer-Friede A."/>
            <person name="Menasche G."/>
            <person name="Koretzky G.A."/>
            <person name="Schraven B."/>
        </authorList>
    </citation>
    <scope>FUNCTION</scope>
</reference>
<reference key="17">
    <citation type="journal article" date="2008" name="J. Proteome Res.">
        <title>Phosphoproteome of resting human platelets.</title>
        <authorList>
            <person name="Zahedi R.P."/>
            <person name="Lewandrowski U."/>
            <person name="Wiesner J."/>
            <person name="Wortelkamp S."/>
            <person name="Moebius J."/>
            <person name="Schuetz C."/>
            <person name="Walter U."/>
            <person name="Gambaryan S."/>
            <person name="Sickmann A."/>
        </authorList>
    </citation>
    <scope>PHOSPHORYLATION [LARGE SCALE ANALYSIS] AT SER-46</scope>
    <scope>IDENTIFICATION BY MASS SPECTROMETRY [LARGE SCALE ANALYSIS]</scope>
    <source>
        <tissue>Platelet</tissue>
    </source>
</reference>
<reference key="18">
    <citation type="journal article" date="2009" name="BMC Immunol.">
        <title>Identification of SH3 domain interaction partners of human FasL (CD178) by phage display screening.</title>
        <authorList>
            <person name="Voss M."/>
            <person name="Lettau M."/>
            <person name="Janssen O."/>
        </authorList>
    </citation>
    <scope>INTERACTION WITH FASLG</scope>
</reference>
<reference key="19">
    <citation type="journal article" date="2009" name="Sci. Signal.">
        <title>Quantitative phosphoproteomic analysis of T cell receptor signaling reveals system-wide modulation of protein-protein interactions.</title>
        <authorList>
            <person name="Mayya V."/>
            <person name="Lundgren D.H."/>
            <person name="Hwang S.-I."/>
            <person name="Rezaul K."/>
            <person name="Wu L."/>
            <person name="Eng J.K."/>
            <person name="Rodionov V."/>
            <person name="Han D.K."/>
        </authorList>
    </citation>
    <scope>PHOSPHORYLATION [LARGE SCALE ANALYSIS] AT SER-46; SER-457; TYR-571; SER-573 AND TYR-651</scope>
    <scope>VARIANT [LARGE SCALE ANALYSIS] PHE-672</scope>
    <scope>IDENTIFICATION BY MASS SPECTROMETRY [LARGE SCALE ANALYSIS]</scope>
    <source>
        <tissue>Leukemic T-cell</tissue>
    </source>
</reference>
<reference key="20">
    <citation type="journal article" date="2009" name="Science">
        <title>Lysine acetylation targets protein complexes and co-regulates major cellular functions.</title>
        <authorList>
            <person name="Choudhary C."/>
            <person name="Kumar C."/>
            <person name="Gnad F."/>
            <person name="Nielsen M.L."/>
            <person name="Rehman M."/>
            <person name="Walther T.C."/>
            <person name="Olsen J.V."/>
            <person name="Mann M."/>
        </authorList>
    </citation>
    <scope>ACETYLATION [LARGE SCALE ANALYSIS] AT LYS-3</scope>
    <scope>IDENTIFICATION BY MASS SPECTROMETRY [LARGE SCALE ANALYSIS]</scope>
</reference>
<reference key="21">
    <citation type="journal article" date="2013" name="J. Proteome Res.">
        <title>Toward a comprehensive characterization of a human cancer cell phosphoproteome.</title>
        <authorList>
            <person name="Zhou H."/>
            <person name="Di Palma S."/>
            <person name="Preisinger C."/>
            <person name="Peng M."/>
            <person name="Polat A.N."/>
            <person name="Heck A.J."/>
            <person name="Mohammed S."/>
        </authorList>
    </citation>
    <scope>PHOSPHORYLATION [LARGE SCALE ANALYSIS] AT SER-46; SER-225; SER-329 AND SER-457</scope>
    <scope>IDENTIFICATION BY MASS SPECTROMETRY [LARGE SCALE ANALYSIS]</scope>
    <source>
        <tissue>Erythroleukemia</tissue>
    </source>
</reference>
<reference key="22">
    <citation type="journal article" date="2014" name="BMC Med. Genet.">
        <title>Recessive thrombocytopenia likely due to a homozygous pathogenic variant in the FYB gene: case report.</title>
        <authorList>
            <person name="Hamamy H."/>
            <person name="Makrythanasis P."/>
            <person name="Al-Allawi N."/>
            <person name="Muhsin A.A."/>
            <person name="Antonarakis S.E."/>
        </authorList>
    </citation>
    <scope>INVOLVEMENT IN THC3</scope>
</reference>
<reference key="23">
    <citation type="journal article" date="2014" name="J. Proteomics">
        <title>An enzyme assisted RP-RPLC approach for in-depth analysis of human liver phosphoproteome.</title>
        <authorList>
            <person name="Bian Y."/>
            <person name="Song C."/>
            <person name="Cheng K."/>
            <person name="Dong M."/>
            <person name="Wang F."/>
            <person name="Huang J."/>
            <person name="Sun D."/>
            <person name="Wang L."/>
            <person name="Ye M."/>
            <person name="Zou H."/>
        </authorList>
    </citation>
    <scope>IDENTIFICATION BY MASS SPECTROMETRY [LARGE SCALE ANALYSIS]</scope>
    <source>
        <tissue>Liver</tissue>
    </source>
</reference>
<reference key="24">
    <citation type="journal article" date="2015" name="J. Thromb. Haemost.">
        <title>Deleterious mutation in the FYB gene is associated with congenital autosomal recessive small-platelet thrombocytopenia.</title>
        <authorList>
            <person name="Levin C."/>
            <person name="Koren A."/>
            <person name="Pretorius E."/>
            <person name="Rosenberg N."/>
            <person name="Shenkman B."/>
            <person name="Hauschner H."/>
            <person name="Zalman L."/>
            <person name="Khayat M."/>
            <person name="Salama I."/>
            <person name="Elpeleg O."/>
            <person name="Shalev S."/>
        </authorList>
    </citation>
    <scope>INVOLVEMENT IN THC3</scope>
    <scope>VARIANT THC3 131-TRP--ASP-783 DEL</scope>
</reference>
<reference key="25">
    <citation type="journal article" date="2016" name="J. Immunol.">
        <title>ARAP, a novel adaptor protein, is required for TCR signaling and integrin-mediated adhesion.</title>
        <authorList>
            <person name="Jung S.H."/>
            <person name="Yoo E.H."/>
            <person name="Yu M.J."/>
            <person name="Song H.M."/>
            <person name="Kang H.Y."/>
            <person name="Cho J.Y."/>
            <person name="Lee J.R."/>
        </authorList>
    </citation>
    <scope>INTERACTION WITH LCP2; SKAP1; FYN AND LCK</scope>
</reference>
<reference key="26">
    <citation type="journal article" date="2004" name="Structure">
        <title>Structure of a helically extended SH3 domain of the T cell adapter protein ADAP.</title>
        <authorList>
            <person name="Heuer K."/>
            <person name="Kofler M."/>
            <person name="Langdon G."/>
            <person name="Thiemke K."/>
            <person name="Freund C."/>
        </authorList>
    </citation>
    <scope>STRUCTURE BY NMR OF 683-771</scope>
</reference>
<comment type="function">
    <text evidence="1 2 7 12 14">Acts as an adapter protein of the FYN and LCP2 signaling cascades in T-cells (By similarity). May play a role in linking T-cell signaling to remodeling of the actin cytoskeleton (PubMed:10747096, PubMed:16980616). Modulates the expression of IL2 (By similarity). Involved in platelet activation (By similarity). Prevents the degradation of SKAP1 and SKAP2 (PubMed:15849195). May be involved in high affinity immunoglobulin epsilon receptor signaling in mast cells (By similarity).</text>
</comment>
<comment type="subunit">
    <text evidence="1 2 7 8 9 12 13 15 18 20 21 22 23">Part of a complex consisting of SKAP2, FYB1 and PTPNS1 (By similarity). Part of a complex consisting of SKAP2, FYB1 and LILRB3 (By similarity). Part of a complex consisting of SKAP1, FYB1 and CLNK (By similarity). Interacts with CLNK (via its SH2 domain); this interaction allows SKAP1 and FYB1 to recruit FYN to the complex, thus promoting the phosphorylation of CLNK by FYN (By similarity). Interacts with FYN (PubMed:15849195, PubMed:27335501, PubMed:9207119). Interacts with LCP2 (PubMed:27335501, PubMed:9207119). Interacts with SKAP1 (PubMed:10856234, PubMed:15849195, PubMed:16461356, PubMed:27335501, PubMed:9671755, PubMed:9748251, PubMed:9755858). Interacts with SKAP2 (PubMed:10942756, PubMed:9671755, PubMed:9755858). Interacts with FASLG (PubMed:19807924). Interacts with EVL (PubMed:10747096). Interacts with TMEM47 (By similarity). Interacts with LCK (PubMed:27335501).</text>
</comment>
<comment type="interaction">
    <interactant intactId="EBI-1753267">
        <id>O15117</id>
    </interactant>
    <interactant intactId="EBI-515315">
        <id>P06241</id>
        <label>FYN</label>
    </interactant>
    <organismsDiffer>false</organismsDiffer>
    <experiments>4</experiments>
</comment>
<comment type="interaction">
    <interactant intactId="EBI-1753267">
        <id>O15117</id>
    </interactant>
    <interactant intactId="EBI-346946">
        <id>Q13094</id>
        <label>LCP2</label>
    </interactant>
    <organismsDiffer>false</organismsDiffer>
    <experiments>9</experiments>
</comment>
<comment type="interaction">
    <interactant intactId="EBI-1753267">
        <id>O15117</id>
    </interactant>
    <interactant intactId="EBI-389883">
        <id>P16333</id>
        <label>NCK1</label>
    </interactant>
    <organismsDiffer>false</organismsDiffer>
    <experiments>3</experiments>
</comment>
<comment type="interaction">
    <interactant intactId="EBI-1753267">
        <id>O15117</id>
    </interactant>
    <interactant intactId="EBI-713635">
        <id>O43639</id>
        <label>NCK2</label>
    </interactant>
    <organismsDiffer>false</organismsDiffer>
    <experiments>3</experiments>
</comment>
<comment type="interaction">
    <interactant intactId="EBI-1753267">
        <id>O15117</id>
    </interactant>
    <interactant intactId="EBI-2477305">
        <id>Q86WV1</id>
        <label>SKAP1</label>
    </interactant>
    <organismsDiffer>false</organismsDiffer>
    <experiments>6</experiments>
</comment>
<comment type="subcellular location">
    <subcellularLocation>
        <location evidence="21">Cytoplasm</location>
    </subcellularLocation>
    <subcellularLocation>
        <location evidence="5">Nucleus</location>
    </subcellularLocation>
    <subcellularLocation>
        <location evidence="2">Cell junction</location>
    </subcellularLocation>
    <text evidence="2">Colocalizes with TMEM47 at cell-cell contacts in podocytes.</text>
</comment>
<comment type="alternative products">
    <event type="alternative splicing"/>
    <isoform>
        <id>O15117-1</id>
        <name>FYB-120</name>
        <sequence type="displayed"/>
    </isoform>
    <isoform>
        <id>O15117-2</id>
        <name>FYB-130</name>
        <sequence type="described" ref="VSP_042309"/>
    </isoform>
    <isoform>
        <id>O15117-3</id>
        <name>3</name>
        <sequence type="described" ref="VSP_047288 VSP_042309"/>
    </isoform>
</comment>
<comment type="tissue specificity">
    <text>Expressed in hematopoietic tissues such as myeloid and T-cells, spleen and thymus. Not expressed in B-cells, nor in non-lymphoid tissues.</text>
</comment>
<comment type="PTM">
    <text>T-cell receptor ligation leads to increased tyrosine phosphorylation.</text>
</comment>
<comment type="disease" evidence="16 17">
    <disease id="DI-04981">
        <name>Thrombocytopenia 3</name>
        <acronym>THC3</acronym>
        <description>A form of thrombocytopenia, a hematologic disorder defined by a decrease in the number of platelets in circulating blood, resulting in the potential for increased bleeding and decreased ability for clotting. THC3 is an autosomal recessive form characterized by onset in infancy.</description>
        <dbReference type="MIM" id="273900"/>
    </disease>
    <text>The disease is caused by variants affecting the gene represented in this entry.</text>
</comment>